<feature type="chain" id="PRO_0000058452" description="Transmembrane protein 115">
    <location>
        <begin position="1"/>
        <end position="350"/>
    </location>
</feature>
<feature type="topological domain" description="Cytoplasmic" evidence="4">
    <location>
        <begin position="1"/>
        <end position="19"/>
    </location>
</feature>
<feature type="transmembrane region" description="Helical; Name=1" evidence="2">
    <location>
        <begin position="20"/>
        <end position="40"/>
    </location>
</feature>
<feature type="topological domain" description="Lumenal" evidence="4">
    <location>
        <begin position="41"/>
        <end position="97"/>
    </location>
</feature>
<feature type="transmembrane region" description="Helical; Name=2" evidence="2">
    <location>
        <begin position="98"/>
        <end position="118"/>
    </location>
</feature>
<feature type="topological domain" description="Cytoplasmic" evidence="4">
    <location>
        <begin position="119"/>
        <end position="126"/>
    </location>
</feature>
<feature type="transmembrane region" description="Helical; Name=3" evidence="2">
    <location>
        <begin position="127"/>
        <end position="147"/>
    </location>
</feature>
<feature type="topological domain" description="Lumenal" evidence="4">
    <location>
        <begin position="148"/>
        <end position="165"/>
    </location>
</feature>
<feature type="transmembrane region" description="Helical; Name=4" evidence="2">
    <location>
        <begin position="166"/>
        <end position="186"/>
    </location>
</feature>
<feature type="topological domain" description="Cytoplasmic" evidence="4">
    <location>
        <begin position="187"/>
        <end position="350"/>
    </location>
</feature>
<feature type="region of interest" description="Mediates homooligomerization" evidence="1">
    <location>
        <begin position="1"/>
        <end position="205"/>
    </location>
</feature>
<feature type="region of interest" description="Mediates localization to the Golgi" evidence="1">
    <location>
        <begin position="206"/>
        <end position="229"/>
    </location>
</feature>
<feature type="region of interest" description="Disordered" evidence="3">
    <location>
        <begin position="299"/>
        <end position="350"/>
    </location>
</feature>
<feature type="modified residue" description="Phosphothreonine" evidence="1">
    <location>
        <position position="329"/>
    </location>
</feature>
<comment type="function">
    <text evidence="1">May play a role in retrograde transport of proteins from the Golgi to the endoplasmic reticulum. May indirectly play a role in protein glycosylation in the Golgi.</text>
</comment>
<comment type="subunit">
    <text evidence="1">Homooligomer. Interacts with COPB1. May interact with LMAN1. Interacts with the COG complex; probably through COG3.</text>
</comment>
<comment type="subcellular location">
    <subcellularLocation>
        <location evidence="1">Golgi apparatus</location>
        <location evidence="1">Golgi stack membrane</location>
        <topology evidence="1">Multi-pass membrane protein</topology>
    </subcellularLocation>
</comment>
<comment type="similarity">
    <text evidence="4">Belongs to the TMEM115 family.</text>
</comment>
<comment type="sequence caution" evidence="4">
    <conflict type="erroneous initiation">
        <sequence resource="EMBL-CDS" id="AAH09099"/>
    </conflict>
    <text>Extended N-terminus.</text>
</comment>
<accession>Q9WUH1</accession>
<accession>Q91VT6</accession>
<gene>
    <name evidence="6" type="primary">Tmem115</name>
    <name evidence="5" type="synonym">Pl6</name>
</gene>
<sequence length="350" mass="38099">MQRALPGARQHLGAILASASVVVKALCAVVLFLYLLSFAVDTGCLAVTPGYLFPPNFWIWTLATHGLMEQHVWDVAISLATVVVAGRLLEPLWGALELLIFFSVVNVSVGLLGALAYLLTYMASFNLVYLFTIRIHGALGFLGGVLVALKQTMGDCVVLRVPQVRVSVVPMLLLALLLLLRLATLLQSPALASYGFGLLSSWVYLRFYQRHSRGRGDMADHFAFATFFPEILQPVVGLLANLVHGLLVKVKICQKTVKRYDVGAPSSITISLPGTDPQDAERRRQLALKALNERLKRVEDQSAWPSMDDDEEEAGAKTDSPLPLEEASTPPGKVTVPESSLITLETAPLL</sequence>
<dbReference type="EMBL" id="AF134238">
    <property type="protein sequence ID" value="AAD24193.1"/>
    <property type="molecule type" value="mRNA"/>
</dbReference>
<dbReference type="EMBL" id="BC009099">
    <property type="protein sequence ID" value="AAH09099.1"/>
    <property type="status" value="ALT_INIT"/>
    <property type="molecule type" value="mRNA"/>
</dbReference>
<dbReference type="EMBL" id="BC019473">
    <property type="protein sequence ID" value="AAH19473.1"/>
    <property type="molecule type" value="mRNA"/>
</dbReference>
<dbReference type="CCDS" id="CCDS23490.1"/>
<dbReference type="RefSeq" id="NP_062678.1">
    <property type="nucleotide sequence ID" value="NM_019704.2"/>
</dbReference>
<dbReference type="BioGRID" id="207950">
    <property type="interactions" value="4"/>
</dbReference>
<dbReference type="FunCoup" id="Q9WUH1">
    <property type="interactions" value="3239"/>
</dbReference>
<dbReference type="STRING" id="10090.ENSMUSP00000010189"/>
<dbReference type="GlyGen" id="Q9WUH1">
    <property type="glycosylation" value="1 site"/>
</dbReference>
<dbReference type="iPTMnet" id="Q9WUH1"/>
<dbReference type="PhosphoSitePlus" id="Q9WUH1"/>
<dbReference type="SwissPalm" id="Q9WUH1"/>
<dbReference type="jPOST" id="Q9WUH1"/>
<dbReference type="PaxDb" id="10090-ENSMUSP00000010189"/>
<dbReference type="ProteomicsDB" id="259521"/>
<dbReference type="Pumba" id="Q9WUH1"/>
<dbReference type="Antibodypedia" id="3346">
    <property type="antibodies" value="108 antibodies from 19 providers"/>
</dbReference>
<dbReference type="DNASU" id="56395"/>
<dbReference type="Ensembl" id="ENSMUST00000010189.3">
    <property type="protein sequence ID" value="ENSMUSP00000010189.2"/>
    <property type="gene ID" value="ENSMUSG00000010045.3"/>
</dbReference>
<dbReference type="GeneID" id="56395"/>
<dbReference type="KEGG" id="mmu:56395"/>
<dbReference type="UCSC" id="uc009rlk.1">
    <property type="organism name" value="mouse"/>
</dbReference>
<dbReference type="AGR" id="MGI:1930765"/>
<dbReference type="CTD" id="11070"/>
<dbReference type="MGI" id="MGI:1930765">
    <property type="gene designation" value="Tmem115"/>
</dbReference>
<dbReference type="VEuPathDB" id="HostDB:ENSMUSG00000010045"/>
<dbReference type="eggNOG" id="KOG2890">
    <property type="taxonomic scope" value="Eukaryota"/>
</dbReference>
<dbReference type="GeneTree" id="ENSGT00390000002470"/>
<dbReference type="HOGENOM" id="CLU_043563_2_0_1"/>
<dbReference type="InParanoid" id="Q9WUH1"/>
<dbReference type="OMA" id="EIHFWEV"/>
<dbReference type="OrthoDB" id="73612at2759"/>
<dbReference type="PhylomeDB" id="Q9WUH1"/>
<dbReference type="TreeFam" id="TF315100"/>
<dbReference type="Reactome" id="R-MMU-6807878">
    <property type="pathway name" value="COPI-mediated anterograde transport"/>
</dbReference>
<dbReference type="BioGRID-ORCS" id="56395">
    <property type="hits" value="5 hits in 77 CRISPR screens"/>
</dbReference>
<dbReference type="PRO" id="PR:Q9WUH1"/>
<dbReference type="Proteomes" id="UP000000589">
    <property type="component" value="Chromosome 9"/>
</dbReference>
<dbReference type="RNAct" id="Q9WUH1">
    <property type="molecule type" value="protein"/>
</dbReference>
<dbReference type="Bgee" id="ENSMUSG00000010045">
    <property type="expression patterns" value="Expressed in saccule of membranous labyrinth and 255 other cell types or tissues"/>
</dbReference>
<dbReference type="ExpressionAtlas" id="Q9WUH1">
    <property type="expression patterns" value="baseline and differential"/>
</dbReference>
<dbReference type="GO" id="GO:0032580">
    <property type="term" value="C:Golgi cisterna membrane"/>
    <property type="evidence" value="ECO:0000250"/>
    <property type="project" value="UniProtKB"/>
</dbReference>
<dbReference type="GO" id="GO:0017119">
    <property type="term" value="C:Golgi transport complex"/>
    <property type="evidence" value="ECO:0007669"/>
    <property type="project" value="Ensembl"/>
</dbReference>
<dbReference type="GO" id="GO:0005634">
    <property type="term" value="C:nucleus"/>
    <property type="evidence" value="ECO:0007669"/>
    <property type="project" value="Ensembl"/>
</dbReference>
<dbReference type="GO" id="GO:0042802">
    <property type="term" value="F:identical protein binding"/>
    <property type="evidence" value="ECO:0000250"/>
    <property type="project" value="UniProtKB"/>
</dbReference>
<dbReference type="GO" id="GO:0006890">
    <property type="term" value="P:retrograde vesicle-mediated transport, Golgi to endoplasmic reticulum"/>
    <property type="evidence" value="ECO:0000250"/>
    <property type="project" value="UniProtKB"/>
</dbReference>
<dbReference type="InterPro" id="IPR035952">
    <property type="entry name" value="Rhomboid-like_sf"/>
</dbReference>
<dbReference type="InterPro" id="IPR013861">
    <property type="entry name" value="TMEM115/Pdh1/Rbl19"/>
</dbReference>
<dbReference type="PANTHER" id="PTHR13377">
    <property type="entry name" value="PLACENTAL PROTEIN 6"/>
    <property type="match status" value="1"/>
</dbReference>
<dbReference type="PANTHER" id="PTHR13377:SF3">
    <property type="entry name" value="TRANSMEMBRANE PROTEIN 115"/>
    <property type="match status" value="1"/>
</dbReference>
<dbReference type="Pfam" id="PF08551">
    <property type="entry name" value="DUF1751"/>
    <property type="match status" value="1"/>
</dbReference>
<dbReference type="SMART" id="SM01160">
    <property type="entry name" value="DUF1751"/>
    <property type="match status" value="1"/>
</dbReference>
<dbReference type="SUPFAM" id="SSF144091">
    <property type="entry name" value="Rhomboid-like"/>
    <property type="match status" value="1"/>
</dbReference>
<name>TM115_MOUSE</name>
<reference key="1">
    <citation type="submission" date="1999-03" db="EMBL/GenBank/DDBJ databases">
        <title>Mouse ortholog of the human gene PL6.</title>
        <authorList>
            <person name="Ivanov S."/>
            <person name="Minna J."/>
            <person name="Lerman M.I."/>
        </authorList>
    </citation>
    <scope>NUCLEOTIDE SEQUENCE [MRNA]</scope>
    <source>
        <strain>C57BL/6J</strain>
    </source>
</reference>
<reference key="2">
    <citation type="journal article" date="2004" name="Genome Res.">
        <title>The status, quality, and expansion of the NIH full-length cDNA project: the Mammalian Gene Collection (MGC).</title>
        <authorList>
            <consortium name="The MGC Project Team"/>
        </authorList>
    </citation>
    <scope>NUCLEOTIDE SEQUENCE [LARGE SCALE MRNA]</scope>
    <source>
        <tissue>Liver</tissue>
    </source>
</reference>
<reference key="3">
    <citation type="journal article" date="2007" name="Proc. Natl. Acad. Sci. U.S.A.">
        <title>Large-scale phosphorylation analysis of mouse liver.</title>
        <authorList>
            <person name="Villen J."/>
            <person name="Beausoleil S.A."/>
            <person name="Gerber S.A."/>
            <person name="Gygi S.P."/>
        </authorList>
    </citation>
    <scope>IDENTIFICATION BY MASS SPECTROMETRY [LARGE SCALE ANALYSIS]</scope>
    <source>
        <tissue>Liver</tissue>
    </source>
</reference>
<reference key="4">
    <citation type="journal article" date="2009" name="Immunity">
        <title>The phagosomal proteome in interferon-gamma-activated macrophages.</title>
        <authorList>
            <person name="Trost M."/>
            <person name="English L."/>
            <person name="Lemieux S."/>
            <person name="Courcelles M."/>
            <person name="Desjardins M."/>
            <person name="Thibault P."/>
        </authorList>
    </citation>
    <scope>IDENTIFICATION BY MASS SPECTROMETRY [LARGE SCALE ANALYSIS]</scope>
</reference>
<reference key="5">
    <citation type="journal article" date="2010" name="Cell">
        <title>A tissue-specific atlas of mouse protein phosphorylation and expression.</title>
        <authorList>
            <person name="Huttlin E.L."/>
            <person name="Jedrychowski M.P."/>
            <person name="Elias J.E."/>
            <person name="Goswami T."/>
            <person name="Rad R."/>
            <person name="Beausoleil S.A."/>
            <person name="Villen J."/>
            <person name="Haas W."/>
            <person name="Sowa M.E."/>
            <person name="Gygi S.P."/>
        </authorList>
    </citation>
    <scope>IDENTIFICATION BY MASS SPECTROMETRY [LARGE SCALE ANALYSIS]</scope>
    <source>
        <tissue>Kidney</tissue>
        <tissue>Lung</tissue>
        <tissue>Pancreas</tissue>
        <tissue>Spleen</tissue>
        <tissue>Testis</tissue>
    </source>
</reference>
<keyword id="KW-0333">Golgi apparatus</keyword>
<keyword id="KW-0472">Membrane</keyword>
<keyword id="KW-0597">Phosphoprotein</keyword>
<keyword id="KW-1185">Reference proteome</keyword>
<keyword id="KW-0812">Transmembrane</keyword>
<keyword id="KW-1133">Transmembrane helix</keyword>
<organism>
    <name type="scientific">Mus musculus</name>
    <name type="common">Mouse</name>
    <dbReference type="NCBI Taxonomy" id="10090"/>
    <lineage>
        <taxon>Eukaryota</taxon>
        <taxon>Metazoa</taxon>
        <taxon>Chordata</taxon>
        <taxon>Craniata</taxon>
        <taxon>Vertebrata</taxon>
        <taxon>Euteleostomi</taxon>
        <taxon>Mammalia</taxon>
        <taxon>Eutheria</taxon>
        <taxon>Euarchontoglires</taxon>
        <taxon>Glires</taxon>
        <taxon>Rodentia</taxon>
        <taxon>Myomorpha</taxon>
        <taxon>Muroidea</taxon>
        <taxon>Muridae</taxon>
        <taxon>Murinae</taxon>
        <taxon>Mus</taxon>
        <taxon>Mus</taxon>
    </lineage>
</organism>
<protein>
    <recommendedName>
        <fullName evidence="4">Transmembrane protein 115</fullName>
    </recommendedName>
    <alternativeName>
        <fullName evidence="4">Protein PL6 homolog</fullName>
    </alternativeName>
</protein>
<evidence type="ECO:0000250" key="1">
    <source>
        <dbReference type="UniProtKB" id="Q12893"/>
    </source>
</evidence>
<evidence type="ECO:0000255" key="2"/>
<evidence type="ECO:0000256" key="3">
    <source>
        <dbReference type="SAM" id="MobiDB-lite"/>
    </source>
</evidence>
<evidence type="ECO:0000305" key="4"/>
<evidence type="ECO:0000312" key="5">
    <source>
        <dbReference type="EMBL" id="AAD24193.1"/>
    </source>
</evidence>
<evidence type="ECO:0000312" key="6">
    <source>
        <dbReference type="MGI" id="MGI:1930765"/>
    </source>
</evidence>
<proteinExistence type="evidence at protein level"/>